<proteinExistence type="evidence at protein level"/>
<protein>
    <recommendedName>
        <fullName>Prostate and testis expressed protein 3</fullName>
    </recommendedName>
    <alternativeName>
        <fullName>Acrosomal vesicle protein HEL-127</fullName>
    </alternativeName>
    <alternativeName>
        <fullName>PATE-like protein DJ</fullName>
        <shortName>PATE-DJ</shortName>
    </alternativeName>
</protein>
<dbReference type="EMBL" id="EU703625">
    <property type="protein sequence ID" value="ACD81924.1"/>
    <property type="molecule type" value="mRNA"/>
</dbReference>
<dbReference type="EMBL" id="EF426753">
    <property type="protein sequence ID" value="ABR09862.1"/>
    <property type="molecule type" value="mRNA"/>
</dbReference>
<dbReference type="EMBL" id="AP003087">
    <property type="status" value="NOT_ANNOTATED_CDS"/>
    <property type="molecule type" value="Genomic_DNA"/>
</dbReference>
<dbReference type="EMBL" id="CH471065">
    <property type="protein sequence ID" value="EAW67664.1"/>
    <property type="molecule type" value="Genomic_DNA"/>
</dbReference>
<dbReference type="CCDS" id="CCDS44764.1"/>
<dbReference type="RefSeq" id="NP_001123355.3">
    <property type="nucleotide sequence ID" value="NM_001129883.4"/>
</dbReference>
<dbReference type="SMR" id="B3GLJ2"/>
<dbReference type="FunCoup" id="B3GLJ2">
    <property type="interactions" value="366"/>
</dbReference>
<dbReference type="STRING" id="9606.ENSP00000395505"/>
<dbReference type="iPTMnet" id="B3GLJ2"/>
<dbReference type="PhosphoSitePlus" id="B3GLJ2"/>
<dbReference type="BioMuta" id="PATE3"/>
<dbReference type="MassIVE" id="B3GLJ2"/>
<dbReference type="PaxDb" id="9606-ENSP00000395505"/>
<dbReference type="PeptideAtlas" id="B3GLJ2"/>
<dbReference type="ProteomicsDB" id="3478"/>
<dbReference type="Antibodypedia" id="71916">
    <property type="antibodies" value="61 antibodies from 13 providers"/>
</dbReference>
<dbReference type="DNASU" id="100169851"/>
<dbReference type="Ensembl" id="ENST00000445202.2">
    <property type="protein sequence ID" value="ENSP00000395505.1"/>
    <property type="gene ID" value="ENSG00000236027.3"/>
</dbReference>
<dbReference type="GeneID" id="100169851"/>
<dbReference type="KEGG" id="hsa:100169851"/>
<dbReference type="MANE-Select" id="ENST00000445202.2">
    <property type="protein sequence ID" value="ENSP00000395505.1"/>
    <property type="RefSeq nucleotide sequence ID" value="NM_001129883.4"/>
    <property type="RefSeq protein sequence ID" value="NP_001123355.3"/>
</dbReference>
<dbReference type="UCSC" id="uc009zbs.3">
    <property type="organism name" value="human"/>
</dbReference>
<dbReference type="AGR" id="HGNC:35426"/>
<dbReference type="CTD" id="100169851"/>
<dbReference type="GeneCards" id="PATE3"/>
<dbReference type="HGNC" id="HGNC:35426">
    <property type="gene designation" value="PATE3"/>
</dbReference>
<dbReference type="HPA" id="ENSG00000236027">
    <property type="expression patterns" value="Tissue enriched (epididymis)"/>
</dbReference>
<dbReference type="neXtProt" id="NX_B3GLJ2"/>
<dbReference type="OpenTargets" id="ENSG00000236027"/>
<dbReference type="PharmGKB" id="PA164724396"/>
<dbReference type="VEuPathDB" id="HostDB:ENSG00000236027"/>
<dbReference type="eggNOG" id="ENOG502TM14">
    <property type="taxonomic scope" value="Eukaryota"/>
</dbReference>
<dbReference type="GeneTree" id="ENSGT00690000102487"/>
<dbReference type="HOGENOM" id="CLU_178161_0_0_1"/>
<dbReference type="InParanoid" id="B3GLJ2"/>
<dbReference type="OMA" id="YVHKCCN"/>
<dbReference type="OrthoDB" id="9827827at2759"/>
<dbReference type="PAN-GO" id="B3GLJ2">
    <property type="GO annotations" value="0 GO annotations based on evolutionary models"/>
</dbReference>
<dbReference type="PhylomeDB" id="B3GLJ2"/>
<dbReference type="BioGRID-ORCS" id="100169851">
    <property type="hits" value="9 hits in 1138 CRISPR screens"/>
</dbReference>
<dbReference type="GenomeRNAi" id="100169851"/>
<dbReference type="Pharos" id="B3GLJ2">
    <property type="development level" value="Tdark"/>
</dbReference>
<dbReference type="PRO" id="PR:B3GLJ2"/>
<dbReference type="Proteomes" id="UP000005640">
    <property type="component" value="Chromosome 11"/>
</dbReference>
<dbReference type="RNAct" id="B3GLJ2">
    <property type="molecule type" value="protein"/>
</dbReference>
<dbReference type="Bgee" id="ENSG00000236027">
    <property type="expression patterns" value="Expressed in male germ line stem cell (sensu Vertebrata) in testis and 6 other cell types or tissues"/>
</dbReference>
<dbReference type="GO" id="GO:0005576">
    <property type="term" value="C:extracellular region"/>
    <property type="evidence" value="ECO:0007669"/>
    <property type="project" value="UniProtKB-SubCell"/>
</dbReference>
<dbReference type="CDD" id="cd23579">
    <property type="entry name" value="TFP_LU_ECD_PATE3"/>
    <property type="match status" value="1"/>
</dbReference>
<dbReference type="InterPro" id="IPR016054">
    <property type="entry name" value="LY6_UPA_recep-like"/>
</dbReference>
<dbReference type="Pfam" id="PF00021">
    <property type="entry name" value="UPAR_LY6"/>
    <property type="match status" value="1"/>
</dbReference>
<keyword id="KW-1015">Disulfide bond</keyword>
<keyword id="KW-1267">Proteomics identification</keyword>
<keyword id="KW-1185">Reference proteome</keyword>
<keyword id="KW-0964">Secreted</keyword>
<keyword id="KW-0732">Signal</keyword>
<feature type="signal peptide" evidence="1">
    <location>
        <begin position="1"/>
        <end position="20"/>
    </location>
</feature>
<feature type="chain" id="PRO_0000354972" description="Prostate and testis expressed protein 3">
    <location>
        <begin position="21"/>
        <end position="98"/>
    </location>
</feature>
<feature type="domain" description="UPAR/Ly6" evidence="3">
    <location>
        <begin position="21"/>
        <end position="97"/>
    </location>
</feature>
<feature type="disulfide bond" evidence="1">
    <location>
        <begin position="23"/>
        <end position="50"/>
    </location>
</feature>
<feature type="disulfide bond" evidence="1">
    <location>
        <begin position="26"/>
        <end position="35"/>
    </location>
</feature>
<feature type="disulfide bond" evidence="1">
    <location>
        <begin position="42"/>
        <end position="68"/>
    </location>
</feature>
<feature type="disulfide bond" evidence="1">
    <location>
        <begin position="72"/>
        <end position="88"/>
    </location>
</feature>
<feature type="sequence variant" id="VAR_059884" description="In dbSNP:rs1025165.">
    <original>T</original>
    <variation>K</variation>
    <location>
        <position position="30"/>
    </location>
</feature>
<feature type="sequence conflict" description="In Ref. 2; ABR09862." evidence="3" ref="2">
    <original>R</original>
    <variation>G</variation>
    <location>
        <position position="58"/>
    </location>
</feature>
<organism>
    <name type="scientific">Homo sapiens</name>
    <name type="common">Human</name>
    <dbReference type="NCBI Taxonomy" id="9606"/>
    <lineage>
        <taxon>Eukaryota</taxon>
        <taxon>Metazoa</taxon>
        <taxon>Chordata</taxon>
        <taxon>Craniata</taxon>
        <taxon>Vertebrata</taxon>
        <taxon>Euteleostomi</taxon>
        <taxon>Mammalia</taxon>
        <taxon>Eutheria</taxon>
        <taxon>Euarchontoglires</taxon>
        <taxon>Primates</taxon>
        <taxon>Haplorrhini</taxon>
        <taxon>Catarrhini</taxon>
        <taxon>Hominidae</taxon>
        <taxon>Homo</taxon>
    </lineage>
</organism>
<sequence>MNKHFLFLFLLYCLIVAVTSLQCITCHLRTRTDRCRRGFGVCTAQKGEACMLLRIYQRNTLQISYMVCQKFCRDMTFDLRNRTYVHTCCNYNYCNFKL</sequence>
<reference key="1">
    <citation type="journal article" date="2008" name="J. Biol. Chem.">
        <title>PATE gene clusters code for multiple, secreted TFP/Ly-6/uPAR proteins that are expressed in reproductive and neuron-rich tissues and possess neuromodulatory activity.</title>
        <authorList>
            <person name="Levitin F."/>
            <person name="Weiss M."/>
            <person name="Hahn Y."/>
            <person name="Stern O."/>
            <person name="Papke R.L."/>
            <person name="Matusik R."/>
            <person name="Nandana S.R."/>
            <person name="Ziv R."/>
            <person name="Pichinuk E."/>
            <person name="Salame S."/>
            <person name="Bera T."/>
            <person name="Vincent J."/>
            <person name="Lee B."/>
            <person name="Pastan I."/>
            <person name="Wreschner D.H."/>
        </authorList>
    </citation>
    <scope>NUCLEOTIDE SEQUENCE [MRNA]</scope>
    <scope>TISSUE SPECIFICITY</scope>
</reference>
<reference key="2">
    <citation type="journal article" date="2008" name="DNA Res.">
        <title>Transcriptome analysis of a cDNA library from adult human epididymis.</title>
        <authorList>
            <person name="Li J.Y."/>
            <person name="Wang H.Y."/>
            <person name="Liu J."/>
            <person name="Liu Q."/>
            <person name="Zhang J.S."/>
            <person name="Wan F.C."/>
            <person name="Liu F.J."/>
            <person name="Jin S.H."/>
            <person name="Zhang Y.L."/>
        </authorList>
    </citation>
    <scope>NUCLEOTIDE SEQUENCE [LARGE SCALE MRNA]</scope>
</reference>
<reference key="3">
    <citation type="journal article" date="2006" name="Nature">
        <title>Human chromosome 11 DNA sequence and analysis including novel gene identification.</title>
        <authorList>
            <person name="Taylor T.D."/>
            <person name="Noguchi H."/>
            <person name="Totoki Y."/>
            <person name="Toyoda A."/>
            <person name="Kuroki Y."/>
            <person name="Dewar K."/>
            <person name="Lloyd C."/>
            <person name="Itoh T."/>
            <person name="Takeda T."/>
            <person name="Kim D.-W."/>
            <person name="She X."/>
            <person name="Barlow K.F."/>
            <person name="Bloom T."/>
            <person name="Bruford E."/>
            <person name="Chang J.L."/>
            <person name="Cuomo C.A."/>
            <person name="Eichler E."/>
            <person name="FitzGerald M.G."/>
            <person name="Jaffe D.B."/>
            <person name="LaButti K."/>
            <person name="Nicol R."/>
            <person name="Park H.-S."/>
            <person name="Seaman C."/>
            <person name="Sougnez C."/>
            <person name="Yang X."/>
            <person name="Zimmer A.R."/>
            <person name="Zody M.C."/>
            <person name="Birren B.W."/>
            <person name="Nusbaum C."/>
            <person name="Fujiyama A."/>
            <person name="Hattori M."/>
            <person name="Rogers J."/>
            <person name="Lander E.S."/>
            <person name="Sakaki Y."/>
        </authorList>
    </citation>
    <scope>NUCLEOTIDE SEQUENCE [LARGE SCALE GENOMIC DNA]</scope>
</reference>
<reference key="4">
    <citation type="submission" date="2005-07" db="EMBL/GenBank/DDBJ databases">
        <authorList>
            <person name="Mural R.J."/>
            <person name="Istrail S."/>
            <person name="Sutton G.G."/>
            <person name="Florea L."/>
            <person name="Halpern A.L."/>
            <person name="Mobarry C.M."/>
            <person name="Lippert R."/>
            <person name="Walenz B."/>
            <person name="Shatkay H."/>
            <person name="Dew I."/>
            <person name="Miller J.R."/>
            <person name="Flanigan M.J."/>
            <person name="Edwards N.J."/>
            <person name="Bolanos R."/>
            <person name="Fasulo D."/>
            <person name="Halldorsson B.V."/>
            <person name="Hannenhalli S."/>
            <person name="Turner R."/>
            <person name="Yooseph S."/>
            <person name="Lu F."/>
            <person name="Nusskern D.R."/>
            <person name="Shue B.C."/>
            <person name="Zheng X.H."/>
            <person name="Zhong F."/>
            <person name="Delcher A.L."/>
            <person name="Huson D.H."/>
            <person name="Kravitz S.A."/>
            <person name="Mouchard L."/>
            <person name="Reinert K."/>
            <person name="Remington K.A."/>
            <person name="Clark A.G."/>
            <person name="Waterman M.S."/>
            <person name="Eichler E.E."/>
            <person name="Adams M.D."/>
            <person name="Hunkapiller M.W."/>
            <person name="Myers E.W."/>
            <person name="Venter J.C."/>
        </authorList>
    </citation>
    <scope>NUCLEOTIDE SEQUENCE [LARGE SCALE GENOMIC DNA]</scope>
</reference>
<evidence type="ECO:0000255" key="1"/>
<evidence type="ECO:0000269" key="2">
    <source>
    </source>
</evidence>
<evidence type="ECO:0000305" key="3"/>
<accession>B3GLJ2</accession>
<accession>B5KFZ3</accession>
<name>PATE3_HUMAN</name>
<gene>
    <name type="primary">PATE3</name>
</gene>
<comment type="subcellular location">
    <subcellularLocation>
        <location evidence="3">Secreted</location>
    </subcellularLocation>
</comment>
<comment type="tissue specificity">
    <text evidence="2">Specifically expressed in prostate and testis.</text>
</comment>
<comment type="similarity">
    <text evidence="3">Belongs to the PATE family.</text>
</comment>